<sequence length="352" mass="37805">MKQNVIALVFGGRSSEHSVALRSAATIHAALMALGHRVHCVGIDREGNWRYQGEPCQFPGAVDRSAPLISIRPGHRSLSYTTQESGTVEIGIDLLFPALHGRWGEDGTIQGLAAMCGLPCVGSGVLGSAMAMDKDVTKRMVQSAGLVVVPWLAMNSMRPWEELVECLGSSTLFVKPATSGSSIGVSRVSNALEYAAAFAIAAREDTKVLVEAAVCGREIECGVLELEEGLMASVVGEIIKKEGHAYYDYQAKYDSNSVTGLRVPSLLPPDIVARIQALSVQAFRCLELKGYARVDFFLTEEGEIILNEINTLPGFTSASMYPKMFECSGYPPPKLVGALVEYGLSSASKERL</sequence>
<keyword id="KW-0067">ATP-binding</keyword>
<keyword id="KW-0133">Cell shape</keyword>
<keyword id="KW-0961">Cell wall biogenesis/degradation</keyword>
<keyword id="KW-0963">Cytoplasm</keyword>
<keyword id="KW-0436">Ligase</keyword>
<keyword id="KW-0460">Magnesium</keyword>
<keyword id="KW-0464">Manganese</keyword>
<keyword id="KW-0479">Metal-binding</keyword>
<keyword id="KW-0547">Nucleotide-binding</keyword>
<keyword id="KW-0573">Peptidoglycan synthesis</keyword>
<keyword id="KW-1185">Reference proteome</keyword>
<evidence type="ECO:0000250" key="1"/>
<evidence type="ECO:0000255" key="2">
    <source>
        <dbReference type="HAMAP-Rule" id="MF_00047"/>
    </source>
</evidence>
<protein>
    <recommendedName>
        <fullName evidence="2">D-alanine--D-alanine ligase A</fullName>
        <ecNumber evidence="2">6.3.2.4</ecNumber>
    </recommendedName>
    <alternativeName>
        <fullName evidence="2">D-Ala-D-Ala ligase A</fullName>
    </alternativeName>
    <alternativeName>
        <fullName evidence="2">D-alanylalanine synthetase A</fullName>
    </alternativeName>
</protein>
<dbReference type="EC" id="6.3.2.4" evidence="2"/>
<dbReference type="EMBL" id="AE015451">
    <property type="protein sequence ID" value="AAN69925.1"/>
    <property type="molecule type" value="Genomic_DNA"/>
</dbReference>
<dbReference type="RefSeq" id="NP_746461.1">
    <property type="nucleotide sequence ID" value="NC_002947.4"/>
</dbReference>
<dbReference type="RefSeq" id="WP_010955074.1">
    <property type="nucleotide sequence ID" value="NZ_CP169744.1"/>
</dbReference>
<dbReference type="SMR" id="Q88EV6"/>
<dbReference type="STRING" id="160488.PP_4346"/>
<dbReference type="PaxDb" id="160488-PP_4346"/>
<dbReference type="KEGG" id="ppu:PP_4346"/>
<dbReference type="PATRIC" id="fig|160488.4.peg.4620"/>
<dbReference type="eggNOG" id="COG1181">
    <property type="taxonomic scope" value="Bacteria"/>
</dbReference>
<dbReference type="HOGENOM" id="CLU_039268_0_0_6"/>
<dbReference type="OrthoDB" id="9813261at2"/>
<dbReference type="PhylomeDB" id="Q88EV6"/>
<dbReference type="BioCyc" id="PPUT160488:G1G01-4624-MONOMER"/>
<dbReference type="UniPathway" id="UPA00219"/>
<dbReference type="Proteomes" id="UP000000556">
    <property type="component" value="Chromosome"/>
</dbReference>
<dbReference type="GO" id="GO:0005829">
    <property type="term" value="C:cytosol"/>
    <property type="evidence" value="ECO:0007669"/>
    <property type="project" value="TreeGrafter"/>
</dbReference>
<dbReference type="GO" id="GO:0005524">
    <property type="term" value="F:ATP binding"/>
    <property type="evidence" value="ECO:0007669"/>
    <property type="project" value="UniProtKB-KW"/>
</dbReference>
<dbReference type="GO" id="GO:0008716">
    <property type="term" value="F:D-alanine-D-alanine ligase activity"/>
    <property type="evidence" value="ECO:0007669"/>
    <property type="project" value="UniProtKB-UniRule"/>
</dbReference>
<dbReference type="GO" id="GO:0046872">
    <property type="term" value="F:metal ion binding"/>
    <property type="evidence" value="ECO:0007669"/>
    <property type="project" value="UniProtKB-KW"/>
</dbReference>
<dbReference type="GO" id="GO:0071555">
    <property type="term" value="P:cell wall organization"/>
    <property type="evidence" value="ECO:0007669"/>
    <property type="project" value="UniProtKB-KW"/>
</dbReference>
<dbReference type="GO" id="GO:0009252">
    <property type="term" value="P:peptidoglycan biosynthetic process"/>
    <property type="evidence" value="ECO:0007669"/>
    <property type="project" value="UniProtKB-UniRule"/>
</dbReference>
<dbReference type="GO" id="GO:0008360">
    <property type="term" value="P:regulation of cell shape"/>
    <property type="evidence" value="ECO:0007669"/>
    <property type="project" value="UniProtKB-KW"/>
</dbReference>
<dbReference type="FunFam" id="3.30.470.20:FF:000008">
    <property type="entry name" value="D-alanine--D-alanine ligase"/>
    <property type="match status" value="1"/>
</dbReference>
<dbReference type="Gene3D" id="3.40.50.20">
    <property type="match status" value="1"/>
</dbReference>
<dbReference type="Gene3D" id="3.30.1490.20">
    <property type="entry name" value="ATP-grasp fold, A domain"/>
    <property type="match status" value="1"/>
</dbReference>
<dbReference type="Gene3D" id="3.30.470.20">
    <property type="entry name" value="ATP-grasp fold, B domain"/>
    <property type="match status" value="1"/>
</dbReference>
<dbReference type="HAMAP" id="MF_00047">
    <property type="entry name" value="Dala_Dala_lig"/>
    <property type="match status" value="1"/>
</dbReference>
<dbReference type="InterPro" id="IPR011761">
    <property type="entry name" value="ATP-grasp"/>
</dbReference>
<dbReference type="InterPro" id="IPR013815">
    <property type="entry name" value="ATP_grasp_subdomain_1"/>
</dbReference>
<dbReference type="InterPro" id="IPR000291">
    <property type="entry name" value="D-Ala_lig_Van_CS"/>
</dbReference>
<dbReference type="InterPro" id="IPR005905">
    <property type="entry name" value="D_ala_D_ala"/>
</dbReference>
<dbReference type="InterPro" id="IPR011095">
    <property type="entry name" value="Dala_Dala_lig_C"/>
</dbReference>
<dbReference type="InterPro" id="IPR011127">
    <property type="entry name" value="Dala_Dala_lig_N"/>
</dbReference>
<dbReference type="InterPro" id="IPR016185">
    <property type="entry name" value="PreATP-grasp_dom_sf"/>
</dbReference>
<dbReference type="NCBIfam" id="TIGR01205">
    <property type="entry name" value="D_ala_D_alaTIGR"/>
    <property type="match status" value="1"/>
</dbReference>
<dbReference type="NCBIfam" id="NF002528">
    <property type="entry name" value="PRK01966.1-4"/>
    <property type="match status" value="1"/>
</dbReference>
<dbReference type="PANTHER" id="PTHR23132">
    <property type="entry name" value="D-ALANINE--D-ALANINE LIGASE"/>
    <property type="match status" value="1"/>
</dbReference>
<dbReference type="PANTHER" id="PTHR23132:SF25">
    <property type="entry name" value="D-ALANINE--D-ALANINE LIGASE A"/>
    <property type="match status" value="1"/>
</dbReference>
<dbReference type="Pfam" id="PF07478">
    <property type="entry name" value="Dala_Dala_lig_C"/>
    <property type="match status" value="1"/>
</dbReference>
<dbReference type="Pfam" id="PF01820">
    <property type="entry name" value="Dala_Dala_lig_N"/>
    <property type="match status" value="1"/>
</dbReference>
<dbReference type="PIRSF" id="PIRSF039102">
    <property type="entry name" value="Ddl/VanB"/>
    <property type="match status" value="1"/>
</dbReference>
<dbReference type="SUPFAM" id="SSF56059">
    <property type="entry name" value="Glutathione synthetase ATP-binding domain-like"/>
    <property type="match status" value="1"/>
</dbReference>
<dbReference type="SUPFAM" id="SSF52440">
    <property type="entry name" value="PreATP-grasp domain"/>
    <property type="match status" value="1"/>
</dbReference>
<dbReference type="PROSITE" id="PS50975">
    <property type="entry name" value="ATP_GRASP"/>
    <property type="match status" value="1"/>
</dbReference>
<dbReference type="PROSITE" id="PS00843">
    <property type="entry name" value="DALA_DALA_LIGASE_1"/>
    <property type="match status" value="1"/>
</dbReference>
<dbReference type="PROSITE" id="PS00844">
    <property type="entry name" value="DALA_DALA_LIGASE_2"/>
    <property type="match status" value="1"/>
</dbReference>
<name>DDLA_PSEPK</name>
<accession>Q88EV6</accession>
<gene>
    <name evidence="2" type="primary">ddlA</name>
    <name type="ordered locus">PP_4346</name>
</gene>
<reference key="1">
    <citation type="journal article" date="2002" name="Environ. Microbiol.">
        <title>Complete genome sequence and comparative analysis of the metabolically versatile Pseudomonas putida KT2440.</title>
        <authorList>
            <person name="Nelson K.E."/>
            <person name="Weinel C."/>
            <person name="Paulsen I.T."/>
            <person name="Dodson R.J."/>
            <person name="Hilbert H."/>
            <person name="Martins dos Santos V.A.P."/>
            <person name="Fouts D.E."/>
            <person name="Gill S.R."/>
            <person name="Pop M."/>
            <person name="Holmes M."/>
            <person name="Brinkac L.M."/>
            <person name="Beanan M.J."/>
            <person name="DeBoy R.T."/>
            <person name="Daugherty S.C."/>
            <person name="Kolonay J.F."/>
            <person name="Madupu R."/>
            <person name="Nelson W.C."/>
            <person name="White O."/>
            <person name="Peterson J.D."/>
            <person name="Khouri H.M."/>
            <person name="Hance I."/>
            <person name="Chris Lee P."/>
            <person name="Holtzapple E.K."/>
            <person name="Scanlan D."/>
            <person name="Tran K."/>
            <person name="Moazzez A."/>
            <person name="Utterback T.R."/>
            <person name="Rizzo M."/>
            <person name="Lee K."/>
            <person name="Kosack D."/>
            <person name="Moestl D."/>
            <person name="Wedler H."/>
            <person name="Lauber J."/>
            <person name="Stjepandic D."/>
            <person name="Hoheisel J."/>
            <person name="Straetz M."/>
            <person name="Heim S."/>
            <person name="Kiewitz C."/>
            <person name="Eisen J.A."/>
            <person name="Timmis K.N."/>
            <person name="Duesterhoeft A."/>
            <person name="Tuemmler B."/>
            <person name="Fraser C.M."/>
        </authorList>
    </citation>
    <scope>NUCLEOTIDE SEQUENCE [LARGE SCALE GENOMIC DNA]</scope>
    <source>
        <strain>ATCC 47054 / DSM 6125 / CFBP 8728 / NCIMB 11950 / KT2440</strain>
    </source>
</reference>
<organism>
    <name type="scientific">Pseudomonas putida (strain ATCC 47054 / DSM 6125 / CFBP 8728 / NCIMB 11950 / KT2440)</name>
    <dbReference type="NCBI Taxonomy" id="160488"/>
    <lineage>
        <taxon>Bacteria</taxon>
        <taxon>Pseudomonadati</taxon>
        <taxon>Pseudomonadota</taxon>
        <taxon>Gammaproteobacteria</taxon>
        <taxon>Pseudomonadales</taxon>
        <taxon>Pseudomonadaceae</taxon>
        <taxon>Pseudomonas</taxon>
    </lineage>
</organism>
<proteinExistence type="inferred from homology"/>
<comment type="function">
    <text evidence="2">Cell wall formation.</text>
</comment>
<comment type="catalytic activity">
    <reaction evidence="2">
        <text>2 D-alanine + ATP = D-alanyl-D-alanine + ADP + phosphate + H(+)</text>
        <dbReference type="Rhea" id="RHEA:11224"/>
        <dbReference type="ChEBI" id="CHEBI:15378"/>
        <dbReference type="ChEBI" id="CHEBI:30616"/>
        <dbReference type="ChEBI" id="CHEBI:43474"/>
        <dbReference type="ChEBI" id="CHEBI:57416"/>
        <dbReference type="ChEBI" id="CHEBI:57822"/>
        <dbReference type="ChEBI" id="CHEBI:456216"/>
        <dbReference type="EC" id="6.3.2.4"/>
    </reaction>
</comment>
<comment type="cofactor">
    <cofactor evidence="1">
        <name>Mg(2+)</name>
        <dbReference type="ChEBI" id="CHEBI:18420"/>
    </cofactor>
    <cofactor evidence="1">
        <name>Mn(2+)</name>
        <dbReference type="ChEBI" id="CHEBI:29035"/>
    </cofactor>
    <text evidence="1">Binds 2 magnesium or manganese ions per subunit.</text>
</comment>
<comment type="pathway">
    <text evidence="2">Cell wall biogenesis; peptidoglycan biosynthesis.</text>
</comment>
<comment type="subcellular location">
    <subcellularLocation>
        <location evidence="2">Cytoplasm</location>
    </subcellularLocation>
</comment>
<comment type="similarity">
    <text evidence="2">Belongs to the D-alanine--D-alanine ligase family.</text>
</comment>
<feature type="chain" id="PRO_0000177857" description="D-alanine--D-alanine ligase A">
    <location>
        <begin position="1"/>
        <end position="352"/>
    </location>
</feature>
<feature type="domain" description="ATP-grasp" evidence="2">
    <location>
        <begin position="138"/>
        <end position="341"/>
    </location>
</feature>
<feature type="binding site" evidence="2">
    <location>
        <begin position="165"/>
        <end position="220"/>
    </location>
    <ligand>
        <name>ATP</name>
        <dbReference type="ChEBI" id="CHEBI:30616"/>
    </ligand>
</feature>
<feature type="binding site" evidence="2">
    <location>
        <position position="295"/>
    </location>
    <ligand>
        <name>Mg(2+)</name>
        <dbReference type="ChEBI" id="CHEBI:18420"/>
        <label>1</label>
    </ligand>
</feature>
<feature type="binding site" evidence="2">
    <location>
        <position position="308"/>
    </location>
    <ligand>
        <name>Mg(2+)</name>
        <dbReference type="ChEBI" id="CHEBI:18420"/>
        <label>1</label>
    </ligand>
</feature>
<feature type="binding site" evidence="2">
    <location>
        <position position="308"/>
    </location>
    <ligand>
        <name>Mg(2+)</name>
        <dbReference type="ChEBI" id="CHEBI:18420"/>
        <label>2</label>
    </ligand>
</feature>
<feature type="binding site" evidence="2">
    <location>
        <position position="310"/>
    </location>
    <ligand>
        <name>Mg(2+)</name>
        <dbReference type="ChEBI" id="CHEBI:18420"/>
        <label>2</label>
    </ligand>
</feature>